<name>RBFA_XYLFT</name>
<accession>Q87EV3</accession>
<proteinExistence type="inferred from homology"/>
<sequence>MPKKSFQRTERISVQIRRDLGAFVQAAVRDHGLPSMSVSDVEVTRDMAHAKVFVTALQAERSFEAVAGLKALARELRMQLAQTMRLRFVPELHFHYDDSLDRGERIDTLLRDLIPPADAEKDESG</sequence>
<keyword id="KW-0963">Cytoplasm</keyword>
<keyword id="KW-1185">Reference proteome</keyword>
<keyword id="KW-0690">Ribosome biogenesis</keyword>
<dbReference type="EMBL" id="AE009442">
    <property type="protein sequence ID" value="AAO28086.1"/>
    <property type="molecule type" value="Genomic_DNA"/>
</dbReference>
<dbReference type="RefSeq" id="WP_004572951.1">
    <property type="nucleotide sequence ID" value="NC_004556.1"/>
</dbReference>
<dbReference type="SMR" id="Q87EV3"/>
<dbReference type="GeneID" id="93903886"/>
<dbReference type="KEGG" id="xft:PD_0195"/>
<dbReference type="HOGENOM" id="CLU_089475_5_0_6"/>
<dbReference type="Proteomes" id="UP000002516">
    <property type="component" value="Chromosome"/>
</dbReference>
<dbReference type="GO" id="GO:0005829">
    <property type="term" value="C:cytosol"/>
    <property type="evidence" value="ECO:0007669"/>
    <property type="project" value="TreeGrafter"/>
</dbReference>
<dbReference type="GO" id="GO:0043024">
    <property type="term" value="F:ribosomal small subunit binding"/>
    <property type="evidence" value="ECO:0007669"/>
    <property type="project" value="TreeGrafter"/>
</dbReference>
<dbReference type="GO" id="GO:0030490">
    <property type="term" value="P:maturation of SSU-rRNA"/>
    <property type="evidence" value="ECO:0007669"/>
    <property type="project" value="UniProtKB-UniRule"/>
</dbReference>
<dbReference type="Gene3D" id="3.30.300.20">
    <property type="match status" value="1"/>
</dbReference>
<dbReference type="HAMAP" id="MF_00003">
    <property type="entry name" value="RbfA"/>
    <property type="match status" value="1"/>
</dbReference>
<dbReference type="InterPro" id="IPR015946">
    <property type="entry name" value="KH_dom-like_a/b"/>
</dbReference>
<dbReference type="InterPro" id="IPR000238">
    <property type="entry name" value="RbfA"/>
</dbReference>
<dbReference type="InterPro" id="IPR023799">
    <property type="entry name" value="RbfA_dom_sf"/>
</dbReference>
<dbReference type="InterPro" id="IPR020053">
    <property type="entry name" value="Ribosome-bd_factorA_CS"/>
</dbReference>
<dbReference type="NCBIfam" id="TIGR00082">
    <property type="entry name" value="rbfA"/>
    <property type="match status" value="1"/>
</dbReference>
<dbReference type="PANTHER" id="PTHR33515">
    <property type="entry name" value="RIBOSOME-BINDING FACTOR A, CHLOROPLASTIC-RELATED"/>
    <property type="match status" value="1"/>
</dbReference>
<dbReference type="PANTHER" id="PTHR33515:SF1">
    <property type="entry name" value="RIBOSOME-BINDING FACTOR A, CHLOROPLASTIC-RELATED"/>
    <property type="match status" value="1"/>
</dbReference>
<dbReference type="Pfam" id="PF02033">
    <property type="entry name" value="RBFA"/>
    <property type="match status" value="1"/>
</dbReference>
<dbReference type="SUPFAM" id="SSF89919">
    <property type="entry name" value="Ribosome-binding factor A, RbfA"/>
    <property type="match status" value="1"/>
</dbReference>
<dbReference type="PROSITE" id="PS01319">
    <property type="entry name" value="RBFA"/>
    <property type="match status" value="1"/>
</dbReference>
<organism>
    <name type="scientific">Xylella fastidiosa (strain Temecula1 / ATCC 700964)</name>
    <dbReference type="NCBI Taxonomy" id="183190"/>
    <lineage>
        <taxon>Bacteria</taxon>
        <taxon>Pseudomonadati</taxon>
        <taxon>Pseudomonadota</taxon>
        <taxon>Gammaproteobacteria</taxon>
        <taxon>Lysobacterales</taxon>
        <taxon>Lysobacteraceae</taxon>
        <taxon>Xylella</taxon>
    </lineage>
</organism>
<protein>
    <recommendedName>
        <fullName evidence="1">Ribosome-binding factor A</fullName>
    </recommendedName>
</protein>
<comment type="function">
    <text evidence="1">One of several proteins that assist in the late maturation steps of the functional core of the 30S ribosomal subunit. Associates with free 30S ribosomal subunits (but not with 30S subunits that are part of 70S ribosomes or polysomes). Required for efficient processing of 16S rRNA. May interact with the 5'-terminal helix region of 16S rRNA.</text>
</comment>
<comment type="subunit">
    <text evidence="1">Monomer. Binds 30S ribosomal subunits, but not 50S ribosomal subunits or 70S ribosomes.</text>
</comment>
<comment type="subcellular location">
    <subcellularLocation>
        <location evidence="1">Cytoplasm</location>
    </subcellularLocation>
</comment>
<comment type="similarity">
    <text evidence="1">Belongs to the RbfA family.</text>
</comment>
<evidence type="ECO:0000255" key="1">
    <source>
        <dbReference type="HAMAP-Rule" id="MF_00003"/>
    </source>
</evidence>
<feature type="chain" id="PRO_0000102776" description="Ribosome-binding factor A">
    <location>
        <begin position="1"/>
        <end position="125"/>
    </location>
</feature>
<gene>
    <name evidence="1" type="primary">rbfA</name>
    <name type="ordered locus">PD_0195</name>
</gene>
<reference key="1">
    <citation type="journal article" date="2003" name="J. Bacteriol.">
        <title>Comparative analyses of the complete genome sequences of Pierce's disease and citrus variegated chlorosis strains of Xylella fastidiosa.</title>
        <authorList>
            <person name="Van Sluys M.A."/>
            <person name="de Oliveira M.C."/>
            <person name="Monteiro-Vitorello C.B."/>
            <person name="Miyaki C.Y."/>
            <person name="Furlan L.R."/>
            <person name="Camargo L.E.A."/>
            <person name="da Silva A.C.R."/>
            <person name="Moon D.H."/>
            <person name="Takita M.A."/>
            <person name="Lemos E.G.M."/>
            <person name="Machado M.A."/>
            <person name="Ferro M.I.T."/>
            <person name="da Silva F.R."/>
            <person name="Goldman M.H.S."/>
            <person name="Goldman G.H."/>
            <person name="Lemos M.V.F."/>
            <person name="El-Dorry H."/>
            <person name="Tsai S.M."/>
            <person name="Carrer H."/>
            <person name="Carraro D.M."/>
            <person name="de Oliveira R.C."/>
            <person name="Nunes L.R."/>
            <person name="Siqueira W.J."/>
            <person name="Coutinho L.L."/>
            <person name="Kimura E.T."/>
            <person name="Ferro E.S."/>
            <person name="Harakava R."/>
            <person name="Kuramae E.E."/>
            <person name="Marino C.L."/>
            <person name="Giglioti E."/>
            <person name="Abreu I.L."/>
            <person name="Alves L.M.C."/>
            <person name="do Amaral A.M."/>
            <person name="Baia G.S."/>
            <person name="Blanco S.R."/>
            <person name="Brito M.S."/>
            <person name="Cannavan F.S."/>
            <person name="Celestino A.V."/>
            <person name="da Cunha A.F."/>
            <person name="Fenille R.C."/>
            <person name="Ferro J.A."/>
            <person name="Formighieri E.F."/>
            <person name="Kishi L.T."/>
            <person name="Leoni S.G."/>
            <person name="Oliveira A.R."/>
            <person name="Rosa V.E. Jr."/>
            <person name="Sassaki F.T."/>
            <person name="Sena J.A.D."/>
            <person name="de Souza A.A."/>
            <person name="Truffi D."/>
            <person name="Tsukumo F."/>
            <person name="Yanai G.M."/>
            <person name="Zaros L.G."/>
            <person name="Civerolo E.L."/>
            <person name="Simpson A.J.G."/>
            <person name="Almeida N.F. Jr."/>
            <person name="Setubal J.C."/>
            <person name="Kitajima J.P."/>
        </authorList>
    </citation>
    <scope>NUCLEOTIDE SEQUENCE [LARGE SCALE GENOMIC DNA]</scope>
    <source>
        <strain>Temecula1 / ATCC 700964</strain>
    </source>
</reference>